<name>FABV_BURO0</name>
<sequence>MIIKPRVRGFICVTTHPVGCEANVKEQIDYVTSHGPIANGPKKVLVIGASTGYGLAARISAAFGSGADTLGVFFERAGSETKPGTAGWYNSAAFEKFAAEKGLYARSINGDAFSDKVKQVTIDTIKQDLGKVDLVVYSLAAPRRTHPKTGETISSTLKPVGKAVTFRGLDTDKEVIREVSLEPATQEEIDGTVAVMGGEDWQMWIDALDEAGVLADGAKTTAFTYLGEQITHDIYWNGSIGEAKKDLDKKVLSIRDKLAAHGGDARVSVLKAVVTQASSAIPMMPLYLSLLFKVMKETGTHEGCIEQVYGLLKDSLYGATPHVDEEGRLRADYKELDPQVQDKVVAMWDKVTNENLYEMTDFAGYKTEFLRLFGFEIAGVDYDADVNPDVKIPGIIDTTV</sequence>
<comment type="function">
    <text evidence="1">Involved in the final reduction of the elongation cycle of fatty acid synthesis (FAS II). Catalyzes the reduction of a carbon-carbon double bond in an enoyl moiety that is covalently linked to an acyl carrier protein (ACP).</text>
</comment>
<comment type="catalytic activity">
    <reaction evidence="1">
        <text>a 2,3-saturated acyl-[ACP] + NAD(+) = a (2E)-enoyl-[ACP] + NADH + H(+)</text>
        <dbReference type="Rhea" id="RHEA:10240"/>
        <dbReference type="Rhea" id="RHEA-COMP:9925"/>
        <dbReference type="Rhea" id="RHEA-COMP:9926"/>
        <dbReference type="ChEBI" id="CHEBI:15378"/>
        <dbReference type="ChEBI" id="CHEBI:57540"/>
        <dbReference type="ChEBI" id="CHEBI:57945"/>
        <dbReference type="ChEBI" id="CHEBI:78784"/>
        <dbReference type="ChEBI" id="CHEBI:78785"/>
        <dbReference type="EC" id="1.3.1.9"/>
    </reaction>
</comment>
<comment type="pathway">
    <text evidence="1">Lipid metabolism; fatty acid biosynthesis.</text>
</comment>
<comment type="subunit">
    <text evidence="1">Monomer.</text>
</comment>
<comment type="similarity">
    <text evidence="1">Belongs to the TER reductase family.</text>
</comment>
<protein>
    <recommendedName>
        <fullName evidence="1">Enoyl-[acyl-carrier-protein] reductase [NADH]</fullName>
        <shortName evidence="1">ENR</shortName>
        <ecNumber evidence="1">1.3.1.9</ecNumber>
    </recommendedName>
</protein>
<organism>
    <name type="scientific">Burkholderia orbicola (strain MC0-3)</name>
    <dbReference type="NCBI Taxonomy" id="406425"/>
    <lineage>
        <taxon>Bacteria</taxon>
        <taxon>Pseudomonadati</taxon>
        <taxon>Pseudomonadota</taxon>
        <taxon>Betaproteobacteria</taxon>
        <taxon>Burkholderiales</taxon>
        <taxon>Burkholderiaceae</taxon>
        <taxon>Burkholderia</taxon>
        <taxon>Burkholderia cepacia complex</taxon>
        <taxon>Burkholderia orbicola</taxon>
    </lineage>
</organism>
<evidence type="ECO:0000255" key="1">
    <source>
        <dbReference type="HAMAP-Rule" id="MF_01838"/>
    </source>
</evidence>
<accession>B1K4I6</accession>
<keyword id="KW-0275">Fatty acid biosynthesis</keyword>
<keyword id="KW-0276">Fatty acid metabolism</keyword>
<keyword id="KW-0444">Lipid biosynthesis</keyword>
<keyword id="KW-0443">Lipid metabolism</keyword>
<keyword id="KW-0520">NAD</keyword>
<keyword id="KW-0560">Oxidoreductase</keyword>
<proteinExistence type="inferred from homology"/>
<feature type="chain" id="PRO_1000188357" description="Enoyl-[acyl-carrier-protein] reductase [NADH]">
    <location>
        <begin position="1"/>
        <end position="400"/>
    </location>
</feature>
<feature type="active site" description="Proton donor" evidence="1">
    <location>
        <position position="235"/>
    </location>
</feature>
<feature type="binding site" evidence="1">
    <location>
        <begin position="48"/>
        <end position="53"/>
    </location>
    <ligand>
        <name>NAD(+)</name>
        <dbReference type="ChEBI" id="CHEBI:57540"/>
    </ligand>
</feature>
<feature type="binding site" evidence="1">
    <location>
        <begin position="74"/>
        <end position="75"/>
    </location>
    <ligand>
        <name>NAD(+)</name>
        <dbReference type="ChEBI" id="CHEBI:57540"/>
    </ligand>
</feature>
<feature type="binding site" evidence="1">
    <location>
        <begin position="111"/>
        <end position="112"/>
    </location>
    <ligand>
        <name>NAD(+)</name>
        <dbReference type="ChEBI" id="CHEBI:57540"/>
    </ligand>
</feature>
<feature type="binding site" evidence="1">
    <location>
        <begin position="139"/>
        <end position="140"/>
    </location>
    <ligand>
        <name>NAD(+)</name>
        <dbReference type="ChEBI" id="CHEBI:57540"/>
    </ligand>
</feature>
<feature type="binding site" evidence="1">
    <location>
        <position position="225"/>
    </location>
    <ligand>
        <name>substrate</name>
    </ligand>
</feature>
<feature type="binding site" evidence="1">
    <location>
        <position position="244"/>
    </location>
    <ligand>
        <name>NAD(+)</name>
        <dbReference type="ChEBI" id="CHEBI:57540"/>
    </ligand>
</feature>
<feature type="binding site" evidence="1">
    <location>
        <begin position="273"/>
        <end position="275"/>
    </location>
    <ligand>
        <name>NAD(+)</name>
        <dbReference type="ChEBI" id="CHEBI:57540"/>
    </ligand>
</feature>
<feature type="site" description="Plays an important role in discriminating NADH against NADPH" evidence="1">
    <location>
        <position position="75"/>
    </location>
</feature>
<reference key="1">
    <citation type="submission" date="2008-02" db="EMBL/GenBank/DDBJ databases">
        <title>Complete sequence of chromosome 2 of Burkholderia cenocepacia MC0-3.</title>
        <authorList>
            <person name="Copeland A."/>
            <person name="Lucas S."/>
            <person name="Lapidus A."/>
            <person name="Barry K."/>
            <person name="Bruce D."/>
            <person name="Goodwin L."/>
            <person name="Glavina del Rio T."/>
            <person name="Dalin E."/>
            <person name="Tice H."/>
            <person name="Pitluck S."/>
            <person name="Chain P."/>
            <person name="Malfatti S."/>
            <person name="Shin M."/>
            <person name="Vergez L."/>
            <person name="Schmutz J."/>
            <person name="Larimer F."/>
            <person name="Land M."/>
            <person name="Hauser L."/>
            <person name="Kyrpides N."/>
            <person name="Mikhailova N."/>
            <person name="Tiedje J."/>
            <person name="Richardson P."/>
        </authorList>
    </citation>
    <scope>NUCLEOTIDE SEQUENCE [LARGE SCALE GENOMIC DNA]</scope>
    <source>
        <strain>MC0-3</strain>
    </source>
</reference>
<dbReference type="EC" id="1.3.1.9" evidence="1"/>
<dbReference type="EMBL" id="CP000959">
    <property type="protein sequence ID" value="ACA93945.1"/>
    <property type="molecule type" value="Genomic_DNA"/>
</dbReference>
<dbReference type="RefSeq" id="WP_011548967.1">
    <property type="nucleotide sequence ID" value="NC_010515.1"/>
</dbReference>
<dbReference type="SMR" id="B1K4I6"/>
<dbReference type="GeneID" id="83051521"/>
<dbReference type="KEGG" id="bcm:Bcenmc03_4815"/>
<dbReference type="HOGENOM" id="CLU_057698_1_0_4"/>
<dbReference type="UniPathway" id="UPA00094"/>
<dbReference type="Proteomes" id="UP000002169">
    <property type="component" value="Chromosome 2"/>
</dbReference>
<dbReference type="GO" id="GO:0004318">
    <property type="term" value="F:enoyl-[acyl-carrier-protein] reductase (NADH) activity"/>
    <property type="evidence" value="ECO:0007669"/>
    <property type="project" value="UniProtKB-UniRule"/>
</dbReference>
<dbReference type="GO" id="GO:0051287">
    <property type="term" value="F:NAD binding"/>
    <property type="evidence" value="ECO:0007669"/>
    <property type="project" value="UniProtKB-UniRule"/>
</dbReference>
<dbReference type="GO" id="GO:0050343">
    <property type="term" value="F:trans-2-enoyl-CoA reductase (NADH) activity"/>
    <property type="evidence" value="ECO:0007669"/>
    <property type="project" value="TreeGrafter"/>
</dbReference>
<dbReference type="GO" id="GO:0006633">
    <property type="term" value="P:fatty acid biosynthetic process"/>
    <property type="evidence" value="ECO:0007669"/>
    <property type="project" value="UniProtKB-UniRule"/>
</dbReference>
<dbReference type="FunFam" id="3.40.50.720:FF:000221">
    <property type="entry name" value="Enoyl-[acyl-carrier-protein] reductase [NADH]"/>
    <property type="match status" value="1"/>
</dbReference>
<dbReference type="Gene3D" id="3.40.50.720">
    <property type="entry name" value="NAD(P)-binding Rossmann-like Domain"/>
    <property type="match status" value="1"/>
</dbReference>
<dbReference type="HAMAP" id="MF_01838">
    <property type="entry name" value="FabV_reductase"/>
    <property type="match status" value="1"/>
</dbReference>
<dbReference type="InterPro" id="IPR024906">
    <property type="entry name" value="Eno_Rdtase_FAD-bd_dom"/>
</dbReference>
<dbReference type="InterPro" id="IPR024910">
    <property type="entry name" value="Enoyl-CoA_Rdtase_cat_dom"/>
</dbReference>
<dbReference type="InterPro" id="IPR050048">
    <property type="entry name" value="FabV-like_NADH_b"/>
</dbReference>
<dbReference type="InterPro" id="IPR010758">
    <property type="entry name" value="Trans-2-enoyl-CoA_reductase"/>
</dbReference>
<dbReference type="NCBIfam" id="NF043048">
    <property type="entry name" value="EnoyACPredFabV"/>
    <property type="match status" value="1"/>
</dbReference>
<dbReference type="NCBIfam" id="NF010177">
    <property type="entry name" value="PRK13656.1"/>
    <property type="match status" value="1"/>
</dbReference>
<dbReference type="PANTHER" id="PTHR37480">
    <property type="entry name" value="ENOYL-[ACYL-CARRIER-PROTEIN] REDUCTASE [NADH]"/>
    <property type="match status" value="1"/>
</dbReference>
<dbReference type="PANTHER" id="PTHR37480:SF1">
    <property type="entry name" value="ENOYL-[ACYL-CARRIER-PROTEIN] REDUCTASE [NADH]"/>
    <property type="match status" value="1"/>
</dbReference>
<dbReference type="Pfam" id="PF07055">
    <property type="entry name" value="Eno-Rase_FAD_bd"/>
    <property type="match status" value="1"/>
</dbReference>
<dbReference type="Pfam" id="PF12242">
    <property type="entry name" value="Eno-Rase_NADH_b"/>
    <property type="match status" value="1"/>
</dbReference>
<dbReference type="Pfam" id="PF12241">
    <property type="entry name" value="Enoyl_reductase"/>
    <property type="match status" value="1"/>
</dbReference>
<gene>
    <name evidence="1" type="primary">fabV</name>
    <name type="ordered locus">Bcenmc03_4815</name>
</gene>